<dbReference type="EMBL" id="X16720">
    <property type="protein sequence ID" value="CAA34702.1"/>
    <property type="molecule type" value="Genomic_DNA"/>
</dbReference>
<dbReference type="PIR" id="S05626">
    <property type="entry name" value="R6MX15"/>
</dbReference>
<dbReference type="SMR" id="P14032"/>
<dbReference type="OMA" id="WGRVGQH"/>
<dbReference type="GO" id="GO:0022625">
    <property type="term" value="C:cytosolic large ribosomal subunit"/>
    <property type="evidence" value="ECO:0007669"/>
    <property type="project" value="TreeGrafter"/>
</dbReference>
<dbReference type="GO" id="GO:0019843">
    <property type="term" value="F:rRNA binding"/>
    <property type="evidence" value="ECO:0007669"/>
    <property type="project" value="UniProtKB-UniRule"/>
</dbReference>
<dbReference type="GO" id="GO:0003735">
    <property type="term" value="F:structural constituent of ribosome"/>
    <property type="evidence" value="ECO:0007669"/>
    <property type="project" value="InterPro"/>
</dbReference>
<dbReference type="GO" id="GO:0006412">
    <property type="term" value="P:translation"/>
    <property type="evidence" value="ECO:0007669"/>
    <property type="project" value="UniProtKB-UniRule"/>
</dbReference>
<dbReference type="Gene3D" id="3.100.10.10">
    <property type="match status" value="1"/>
</dbReference>
<dbReference type="Gene3D" id="4.10.990.10">
    <property type="match status" value="1"/>
</dbReference>
<dbReference type="HAMAP" id="MF_01341">
    <property type="entry name" value="Ribosomal_uL15"/>
    <property type="match status" value="1"/>
</dbReference>
<dbReference type="InterPro" id="IPR027386">
    <property type="entry name" value="Rbsml_uL15_N"/>
</dbReference>
<dbReference type="InterPro" id="IPR030878">
    <property type="entry name" value="Ribosomal_uL15"/>
</dbReference>
<dbReference type="InterPro" id="IPR021131">
    <property type="entry name" value="Ribosomal_uL15/eL18"/>
</dbReference>
<dbReference type="InterPro" id="IPR036227">
    <property type="entry name" value="Ribosomal_uL15/eL18_sf"/>
</dbReference>
<dbReference type="InterPro" id="IPR001196">
    <property type="entry name" value="Ribosomal_uL15_CS"/>
</dbReference>
<dbReference type="PANTHER" id="PTHR11721">
    <property type="entry name" value="60S RIBOSOMAL PROTEIN L27A"/>
    <property type="match status" value="1"/>
</dbReference>
<dbReference type="PANTHER" id="PTHR11721:SF3">
    <property type="entry name" value="LARGE RIBOSOMAL SUBUNIT PROTEIN UL15"/>
    <property type="match status" value="1"/>
</dbReference>
<dbReference type="Pfam" id="PF00828">
    <property type="entry name" value="Ribosomal_L27A"/>
    <property type="match status" value="1"/>
</dbReference>
<dbReference type="SUPFAM" id="SSF52080">
    <property type="entry name" value="Ribosomal proteins L15p and L18e"/>
    <property type="match status" value="1"/>
</dbReference>
<dbReference type="PROSITE" id="PS00475">
    <property type="entry name" value="RIBOSOMAL_L15"/>
    <property type="match status" value="1"/>
</dbReference>
<keyword id="KW-0687">Ribonucleoprotein</keyword>
<keyword id="KW-0689">Ribosomal protein</keyword>
<keyword id="KW-0694">RNA-binding</keyword>
<keyword id="KW-0699">rRNA-binding</keyword>
<comment type="function">
    <text evidence="1">Binds to the 23S rRNA.</text>
</comment>
<comment type="subunit">
    <text evidence="1">Part of the 50S ribosomal subunit.</text>
</comment>
<comment type="similarity">
    <text evidence="1">Belongs to the universal ribosomal protein uL15 family.</text>
</comment>
<gene>
    <name evidence="1" type="primary">rpl15</name>
</gene>
<sequence>MIRKSKKITKQRGSRTCGYGEAKKHRGAGHRGGRGNAGHQKHKWLSVCKFNPEYFGKYGFNRNPCLIKKLETINVGELEEYVLKYKDAFKLKDGKVVVNATEIGFEKILGKGRISTAMVVKAVEFSEGAKEKIEAAGGEFVEL</sequence>
<protein>
    <recommendedName>
        <fullName evidence="1">Large ribosomal subunit protein uL15</fullName>
    </recommendedName>
    <alternativeName>
        <fullName evidence="3">50S ribosomal protein L15</fullName>
    </alternativeName>
</protein>
<evidence type="ECO:0000255" key="1">
    <source>
        <dbReference type="HAMAP-Rule" id="MF_01341"/>
    </source>
</evidence>
<evidence type="ECO:0000256" key="2">
    <source>
        <dbReference type="SAM" id="MobiDB-lite"/>
    </source>
</evidence>
<evidence type="ECO:0000305" key="3"/>
<reference key="1">
    <citation type="journal article" date="1989" name="J. Mol. Biol.">
        <title>Organization and structure of the Methanococcus transcriptional unit homologous to the Escherichia coli 'spectinomycin operon'. Implications for the evolutionary relationship of 70 S and 80 S ribosomes.</title>
        <authorList>
            <person name="Auer J."/>
            <person name="Spicker G."/>
            <person name="Boeck A."/>
        </authorList>
    </citation>
    <scope>NUCLEOTIDE SEQUENCE [GENOMIC DNA]</scope>
</reference>
<organism>
    <name type="scientific">Methanococcus vannielii</name>
    <dbReference type="NCBI Taxonomy" id="2187"/>
    <lineage>
        <taxon>Archaea</taxon>
        <taxon>Methanobacteriati</taxon>
        <taxon>Methanobacteriota</taxon>
        <taxon>Methanomada group</taxon>
        <taxon>Methanococci</taxon>
        <taxon>Methanococcales</taxon>
        <taxon>Methanococcaceae</taxon>
        <taxon>Methanococcus</taxon>
    </lineage>
</organism>
<proteinExistence type="inferred from homology"/>
<feature type="chain" id="PRO_0000104865" description="Large ribosomal subunit protein uL15">
    <location>
        <begin position="1"/>
        <end position="143"/>
    </location>
</feature>
<feature type="region of interest" description="Disordered" evidence="2">
    <location>
        <begin position="1"/>
        <end position="38"/>
    </location>
</feature>
<feature type="compositionally biased region" description="Basic residues" evidence="2">
    <location>
        <begin position="1"/>
        <end position="13"/>
    </location>
</feature>
<feature type="compositionally biased region" description="Basic residues" evidence="2">
    <location>
        <begin position="23"/>
        <end position="38"/>
    </location>
</feature>
<name>RL15_METVA</name>
<accession>P14032</accession>